<name>AACS_MOUSE</name>
<reference key="1">
    <citation type="submission" date="2001-01" db="EMBL/GenBank/DDBJ databases">
        <title>mouse acetoacetyl-CoA synthetase.</title>
        <authorList>
            <person name="Takahashi N."/>
            <person name="Ohgami M."/>
            <person name="Yamasaki M."/>
            <person name="Fukui T."/>
        </authorList>
    </citation>
    <scope>NUCLEOTIDE SEQUENCE [MRNA]</scope>
    <source>
        <strain>ddY</strain>
        <tissue>Liver</tissue>
    </source>
</reference>
<reference key="2">
    <citation type="submission" date="2001-02" db="EMBL/GenBank/DDBJ databases">
        <title>Murine acetoacetyl-coenzyme A synthetase.</title>
        <authorList>
            <person name="Sone H."/>
            <person name="Shimano H."/>
            <person name="Yamada N."/>
        </authorList>
    </citation>
    <scope>NUCLEOTIDE SEQUENCE [MRNA]</scope>
</reference>
<reference key="3">
    <citation type="journal article" date="2005" name="Science">
        <title>The transcriptional landscape of the mammalian genome.</title>
        <authorList>
            <person name="Carninci P."/>
            <person name="Kasukawa T."/>
            <person name="Katayama S."/>
            <person name="Gough J."/>
            <person name="Frith M.C."/>
            <person name="Maeda N."/>
            <person name="Oyama R."/>
            <person name="Ravasi T."/>
            <person name="Lenhard B."/>
            <person name="Wells C."/>
            <person name="Kodzius R."/>
            <person name="Shimokawa K."/>
            <person name="Bajic V.B."/>
            <person name="Brenner S.E."/>
            <person name="Batalov S."/>
            <person name="Forrest A.R."/>
            <person name="Zavolan M."/>
            <person name="Davis M.J."/>
            <person name="Wilming L.G."/>
            <person name="Aidinis V."/>
            <person name="Allen J.E."/>
            <person name="Ambesi-Impiombato A."/>
            <person name="Apweiler R."/>
            <person name="Aturaliya R.N."/>
            <person name="Bailey T.L."/>
            <person name="Bansal M."/>
            <person name="Baxter L."/>
            <person name="Beisel K.W."/>
            <person name="Bersano T."/>
            <person name="Bono H."/>
            <person name="Chalk A.M."/>
            <person name="Chiu K.P."/>
            <person name="Choudhary V."/>
            <person name="Christoffels A."/>
            <person name="Clutterbuck D.R."/>
            <person name="Crowe M.L."/>
            <person name="Dalla E."/>
            <person name="Dalrymple B.P."/>
            <person name="de Bono B."/>
            <person name="Della Gatta G."/>
            <person name="di Bernardo D."/>
            <person name="Down T."/>
            <person name="Engstrom P."/>
            <person name="Fagiolini M."/>
            <person name="Faulkner G."/>
            <person name="Fletcher C.F."/>
            <person name="Fukushima T."/>
            <person name="Furuno M."/>
            <person name="Futaki S."/>
            <person name="Gariboldi M."/>
            <person name="Georgii-Hemming P."/>
            <person name="Gingeras T.R."/>
            <person name="Gojobori T."/>
            <person name="Green R.E."/>
            <person name="Gustincich S."/>
            <person name="Harbers M."/>
            <person name="Hayashi Y."/>
            <person name="Hensch T.K."/>
            <person name="Hirokawa N."/>
            <person name="Hill D."/>
            <person name="Huminiecki L."/>
            <person name="Iacono M."/>
            <person name="Ikeo K."/>
            <person name="Iwama A."/>
            <person name="Ishikawa T."/>
            <person name="Jakt M."/>
            <person name="Kanapin A."/>
            <person name="Katoh M."/>
            <person name="Kawasawa Y."/>
            <person name="Kelso J."/>
            <person name="Kitamura H."/>
            <person name="Kitano H."/>
            <person name="Kollias G."/>
            <person name="Krishnan S.P."/>
            <person name="Kruger A."/>
            <person name="Kummerfeld S.K."/>
            <person name="Kurochkin I.V."/>
            <person name="Lareau L.F."/>
            <person name="Lazarevic D."/>
            <person name="Lipovich L."/>
            <person name="Liu J."/>
            <person name="Liuni S."/>
            <person name="McWilliam S."/>
            <person name="Madan Babu M."/>
            <person name="Madera M."/>
            <person name="Marchionni L."/>
            <person name="Matsuda H."/>
            <person name="Matsuzawa S."/>
            <person name="Miki H."/>
            <person name="Mignone F."/>
            <person name="Miyake S."/>
            <person name="Morris K."/>
            <person name="Mottagui-Tabar S."/>
            <person name="Mulder N."/>
            <person name="Nakano N."/>
            <person name="Nakauchi H."/>
            <person name="Ng P."/>
            <person name="Nilsson R."/>
            <person name="Nishiguchi S."/>
            <person name="Nishikawa S."/>
            <person name="Nori F."/>
            <person name="Ohara O."/>
            <person name="Okazaki Y."/>
            <person name="Orlando V."/>
            <person name="Pang K.C."/>
            <person name="Pavan W.J."/>
            <person name="Pavesi G."/>
            <person name="Pesole G."/>
            <person name="Petrovsky N."/>
            <person name="Piazza S."/>
            <person name="Reed J."/>
            <person name="Reid J.F."/>
            <person name="Ring B.Z."/>
            <person name="Ringwald M."/>
            <person name="Rost B."/>
            <person name="Ruan Y."/>
            <person name="Salzberg S.L."/>
            <person name="Sandelin A."/>
            <person name="Schneider C."/>
            <person name="Schoenbach C."/>
            <person name="Sekiguchi K."/>
            <person name="Semple C.A."/>
            <person name="Seno S."/>
            <person name="Sessa L."/>
            <person name="Sheng Y."/>
            <person name="Shibata Y."/>
            <person name="Shimada H."/>
            <person name="Shimada K."/>
            <person name="Silva D."/>
            <person name="Sinclair B."/>
            <person name="Sperling S."/>
            <person name="Stupka E."/>
            <person name="Sugiura K."/>
            <person name="Sultana R."/>
            <person name="Takenaka Y."/>
            <person name="Taki K."/>
            <person name="Tammoja K."/>
            <person name="Tan S.L."/>
            <person name="Tang S."/>
            <person name="Taylor M.S."/>
            <person name="Tegner J."/>
            <person name="Teichmann S.A."/>
            <person name="Ueda H.R."/>
            <person name="van Nimwegen E."/>
            <person name="Verardo R."/>
            <person name="Wei C.L."/>
            <person name="Yagi K."/>
            <person name="Yamanishi H."/>
            <person name="Zabarovsky E."/>
            <person name="Zhu S."/>
            <person name="Zimmer A."/>
            <person name="Hide W."/>
            <person name="Bult C."/>
            <person name="Grimmond S.M."/>
            <person name="Teasdale R.D."/>
            <person name="Liu E.T."/>
            <person name="Brusic V."/>
            <person name="Quackenbush J."/>
            <person name="Wahlestedt C."/>
            <person name="Mattick J.S."/>
            <person name="Hume D.A."/>
            <person name="Kai C."/>
            <person name="Sasaki D."/>
            <person name="Tomaru Y."/>
            <person name="Fukuda S."/>
            <person name="Kanamori-Katayama M."/>
            <person name="Suzuki M."/>
            <person name="Aoki J."/>
            <person name="Arakawa T."/>
            <person name="Iida J."/>
            <person name="Imamura K."/>
            <person name="Itoh M."/>
            <person name="Kato T."/>
            <person name="Kawaji H."/>
            <person name="Kawagashira N."/>
            <person name="Kawashima T."/>
            <person name="Kojima M."/>
            <person name="Kondo S."/>
            <person name="Konno H."/>
            <person name="Nakano K."/>
            <person name="Ninomiya N."/>
            <person name="Nishio T."/>
            <person name="Okada M."/>
            <person name="Plessy C."/>
            <person name="Shibata K."/>
            <person name="Shiraki T."/>
            <person name="Suzuki S."/>
            <person name="Tagami M."/>
            <person name="Waki K."/>
            <person name="Watahiki A."/>
            <person name="Okamura-Oho Y."/>
            <person name="Suzuki H."/>
            <person name="Kawai J."/>
            <person name="Hayashizaki Y."/>
        </authorList>
    </citation>
    <scope>NUCLEOTIDE SEQUENCE [LARGE SCALE MRNA]</scope>
    <source>
        <strain>C57BL/6J</strain>
        <strain>NOD</strain>
        <tissue>Amnion</tissue>
        <tissue>Bone marrow</tissue>
        <tissue>Brain cortex</tissue>
        <tissue>Diencephalon</tissue>
        <tissue>Kidney</tissue>
        <tissue>Stomach</tissue>
    </source>
</reference>
<reference key="4">
    <citation type="journal article" date="2004" name="Genome Res.">
        <title>The status, quality, and expansion of the NIH full-length cDNA project: the Mammalian Gene Collection (MGC).</title>
        <authorList>
            <consortium name="The MGC Project Team"/>
        </authorList>
    </citation>
    <scope>NUCLEOTIDE SEQUENCE [LARGE SCALE MRNA]</scope>
    <source>
        <strain>FVB/N</strain>
        <tissue>Kidney</tissue>
    </source>
</reference>
<reference key="5">
    <citation type="journal article" date="2010" name="Cell">
        <title>A tissue-specific atlas of mouse protein phosphorylation and expression.</title>
        <authorList>
            <person name="Huttlin E.L."/>
            <person name="Jedrychowski M.P."/>
            <person name="Elias J.E."/>
            <person name="Goswami T."/>
            <person name="Rad R."/>
            <person name="Beausoleil S.A."/>
            <person name="Villen J."/>
            <person name="Haas W."/>
            <person name="Sowa M.E."/>
            <person name="Gygi S.P."/>
        </authorList>
    </citation>
    <scope>IDENTIFICATION BY MASS SPECTROMETRY [LARGE SCALE ANALYSIS]</scope>
    <source>
        <tissue>Brain</tissue>
        <tissue>Brown adipose tissue</tissue>
        <tissue>Kidney</tissue>
        <tissue>Liver</tissue>
        <tissue>Lung</tissue>
        <tissue>Pancreas</tissue>
        <tissue>Spleen</tissue>
    </source>
</reference>
<reference key="6">
    <citation type="journal article" date="2012" name="Mol. Genet. Metab.">
        <title>Acetoacetyl-CoA synthetase, a ketone body-utilizing enzyme, is controlled by SREBP-2 and affects serum cholesterol levels.</title>
        <authorList>
            <person name="Hasegawa S."/>
            <person name="Noda K."/>
            <person name="Maeda A."/>
            <person name="Matsuoka M."/>
            <person name="Yamasaki M."/>
            <person name="Fukui T."/>
        </authorList>
    </citation>
    <scope>FUNCTION</scope>
</reference>
<gene>
    <name type="primary">Aacs</name>
</gene>
<sequence length="672" mass="75200">MSKLARLEREEIMECQVMWEPDSKKDTQMDRFRAAVGTACGLALGNYNDLYHWSVRSYMDFWAEFWKFSGIVYSRMYDEVVDTSKGIADVPEWFRGSRLNYAENLLRHKENDRVALYVAREGREEIVKVTFEELRQQVALFAAAMRKMGVKKGDRVVGYLPNSAHAVEAMLAAASIGAIWSSTSPDFGVNGVLDRFSQIQPKLIFSVEAVVYNGKEHGHLEKLQRVVKGLPDLQRVVLIPYVLPREKIDISKIPNSVFLDDFLASGTGAQAPQLEFEQLPFSHPLFIMFSSGTTGAPKCMVHSAGGTLIQHLKEHMLHGNMTSSDILLYYTTVGWMMWNWMVSALATGASLVLYDGSPLVPTPNVLWDLVDRIGITILGTGAKWLSVLEEKDMKPVETHNLHTLHTILSTGSPLKAQSYEYVYRCIKSSVLLGSISGGTDIISCFMGQNSSIPVYKGEIQARNLGMAVEAWDEEGKAVWGASGELVCTKPIPCQPTHFWNDENGSKYRKAYFSKFPGVWAHGDYCRINPKTGGIIMLGRSDGTLNPNGVRFGSSEIYNIVEAFDEVEDSLCVPQYNRDGEERVVLFLKMASGHTFQPDLVKRIRDAIRLGLSARHVPSLILETRGIPYTLNGKKVEVAVKQVMAGRTVEHRGAFSNPETLDLYRDIPELQDF</sequence>
<organism>
    <name type="scientific">Mus musculus</name>
    <name type="common">Mouse</name>
    <dbReference type="NCBI Taxonomy" id="10090"/>
    <lineage>
        <taxon>Eukaryota</taxon>
        <taxon>Metazoa</taxon>
        <taxon>Chordata</taxon>
        <taxon>Craniata</taxon>
        <taxon>Vertebrata</taxon>
        <taxon>Euteleostomi</taxon>
        <taxon>Mammalia</taxon>
        <taxon>Eutheria</taxon>
        <taxon>Euarchontoglires</taxon>
        <taxon>Glires</taxon>
        <taxon>Rodentia</taxon>
        <taxon>Myomorpha</taxon>
        <taxon>Muroidea</taxon>
        <taxon>Muridae</taxon>
        <taxon>Murinae</taxon>
        <taxon>Mus</taxon>
        <taxon>Mus</taxon>
    </lineage>
</organism>
<dbReference type="EC" id="6.2.1.16" evidence="1"/>
<dbReference type="EMBL" id="AB054122">
    <property type="protein sequence ID" value="BAF44057.1"/>
    <property type="molecule type" value="mRNA"/>
</dbReference>
<dbReference type="EMBL" id="AB056114">
    <property type="protein sequence ID" value="BAB63403.1"/>
    <property type="molecule type" value="mRNA"/>
</dbReference>
<dbReference type="EMBL" id="AK019063">
    <property type="protein sequence ID" value="BAB31530.1"/>
    <property type="molecule type" value="mRNA"/>
</dbReference>
<dbReference type="EMBL" id="AK034184">
    <property type="protein sequence ID" value="BAC28621.1"/>
    <property type="molecule type" value="mRNA"/>
</dbReference>
<dbReference type="EMBL" id="AK043848">
    <property type="protein sequence ID" value="BAC31680.1"/>
    <property type="molecule type" value="mRNA"/>
</dbReference>
<dbReference type="EMBL" id="AK044017">
    <property type="protein sequence ID" value="BAC31740.1"/>
    <property type="molecule type" value="mRNA"/>
</dbReference>
<dbReference type="EMBL" id="AK147189">
    <property type="protein sequence ID" value="BAE27749.1"/>
    <property type="molecule type" value="mRNA"/>
</dbReference>
<dbReference type="EMBL" id="AK150266">
    <property type="protein sequence ID" value="BAE29423.1"/>
    <property type="molecule type" value="mRNA"/>
</dbReference>
<dbReference type="EMBL" id="AK165418">
    <property type="protein sequence ID" value="BAE38173.1"/>
    <property type="molecule type" value="mRNA"/>
</dbReference>
<dbReference type="EMBL" id="AK165457">
    <property type="protein sequence ID" value="BAE38197.1"/>
    <property type="molecule type" value="mRNA"/>
</dbReference>
<dbReference type="EMBL" id="AK170120">
    <property type="protein sequence ID" value="BAE41577.1"/>
    <property type="molecule type" value="mRNA"/>
</dbReference>
<dbReference type="EMBL" id="AK170653">
    <property type="protein sequence ID" value="BAE41938.1"/>
    <property type="molecule type" value="mRNA"/>
</dbReference>
<dbReference type="EMBL" id="AK170856">
    <property type="protein sequence ID" value="BAE42076.1"/>
    <property type="molecule type" value="mRNA"/>
</dbReference>
<dbReference type="EMBL" id="BC026817">
    <property type="protein sequence ID" value="AAH26817.1"/>
    <property type="molecule type" value="mRNA"/>
</dbReference>
<dbReference type="CCDS" id="CCDS19687.1"/>
<dbReference type="RefSeq" id="NP_084486.1">
    <property type="nucleotide sequence ID" value="NM_030210.2"/>
</dbReference>
<dbReference type="SMR" id="Q9D2R0"/>
<dbReference type="BioGRID" id="219689">
    <property type="interactions" value="5"/>
</dbReference>
<dbReference type="FunCoup" id="Q9D2R0">
    <property type="interactions" value="454"/>
</dbReference>
<dbReference type="IntAct" id="Q9D2R0">
    <property type="interactions" value="1"/>
</dbReference>
<dbReference type="STRING" id="10090.ENSMUSP00000031445"/>
<dbReference type="iPTMnet" id="Q9D2R0"/>
<dbReference type="PhosphoSitePlus" id="Q9D2R0"/>
<dbReference type="SwissPalm" id="Q9D2R0"/>
<dbReference type="jPOST" id="Q9D2R0"/>
<dbReference type="PaxDb" id="10090-ENSMUSP00000031445"/>
<dbReference type="PeptideAtlas" id="Q9D2R0"/>
<dbReference type="ProteomicsDB" id="286039"/>
<dbReference type="Pumba" id="Q9D2R0"/>
<dbReference type="Antibodypedia" id="31900">
    <property type="antibodies" value="141 antibodies from 19 providers"/>
</dbReference>
<dbReference type="DNASU" id="78894"/>
<dbReference type="Ensembl" id="ENSMUST00000031445.5">
    <property type="protein sequence ID" value="ENSMUSP00000031445.4"/>
    <property type="gene ID" value="ENSMUSG00000029482.5"/>
</dbReference>
<dbReference type="GeneID" id="78894"/>
<dbReference type="KEGG" id="mmu:78894"/>
<dbReference type="UCSC" id="uc008zrs.1">
    <property type="organism name" value="mouse"/>
</dbReference>
<dbReference type="AGR" id="MGI:1926144"/>
<dbReference type="CTD" id="65985"/>
<dbReference type="MGI" id="MGI:1926144">
    <property type="gene designation" value="Aacs"/>
</dbReference>
<dbReference type="VEuPathDB" id="HostDB:ENSMUSG00000029482"/>
<dbReference type="eggNOG" id="KOG1175">
    <property type="taxonomic scope" value="Eukaryota"/>
</dbReference>
<dbReference type="GeneTree" id="ENSGT00940000156044"/>
<dbReference type="HOGENOM" id="CLU_000022_3_3_1"/>
<dbReference type="InParanoid" id="Q9D2R0"/>
<dbReference type="OMA" id="MPNTWQT"/>
<dbReference type="OrthoDB" id="10253869at2759"/>
<dbReference type="PhylomeDB" id="Q9D2R0"/>
<dbReference type="TreeFam" id="TF354241"/>
<dbReference type="BRENDA" id="6.2.1.16">
    <property type="organism ID" value="3474"/>
</dbReference>
<dbReference type="Reactome" id="R-MMU-77111">
    <property type="pathway name" value="Synthesis of Ketone Bodies"/>
</dbReference>
<dbReference type="BioGRID-ORCS" id="78894">
    <property type="hits" value="2 hits in 64 CRISPR screens"/>
</dbReference>
<dbReference type="PRO" id="PR:Q9D2R0"/>
<dbReference type="Proteomes" id="UP000000589">
    <property type="component" value="Chromosome 5"/>
</dbReference>
<dbReference type="RNAct" id="Q9D2R0">
    <property type="molecule type" value="protein"/>
</dbReference>
<dbReference type="Bgee" id="ENSMUSG00000029482">
    <property type="expression patterns" value="Expressed in right kidney and 238 other cell types or tissues"/>
</dbReference>
<dbReference type="GO" id="GO:0005829">
    <property type="term" value="C:cytosol"/>
    <property type="evidence" value="ECO:0007669"/>
    <property type="project" value="UniProtKB-SubCell"/>
</dbReference>
<dbReference type="GO" id="GO:0030729">
    <property type="term" value="F:acetoacetate-CoA ligase activity"/>
    <property type="evidence" value="ECO:0007669"/>
    <property type="project" value="UniProtKB-EC"/>
</dbReference>
<dbReference type="GO" id="GO:0005524">
    <property type="term" value="F:ATP binding"/>
    <property type="evidence" value="ECO:0007669"/>
    <property type="project" value="UniProtKB-KW"/>
</dbReference>
<dbReference type="GO" id="GO:0006631">
    <property type="term" value="P:fatty acid metabolic process"/>
    <property type="evidence" value="ECO:0007669"/>
    <property type="project" value="UniProtKB-KW"/>
</dbReference>
<dbReference type="CDD" id="cd05943">
    <property type="entry name" value="AACS"/>
    <property type="match status" value="1"/>
</dbReference>
<dbReference type="FunFam" id="3.40.50.12780:FF:000036">
    <property type="entry name" value="Acetoacetyl-CoA synthetase"/>
    <property type="match status" value="1"/>
</dbReference>
<dbReference type="FunFam" id="3.30.300.30:FF:000037">
    <property type="entry name" value="acetoacetyl-CoA synthetase"/>
    <property type="match status" value="1"/>
</dbReference>
<dbReference type="Gene3D" id="3.30.300.30">
    <property type="match status" value="1"/>
</dbReference>
<dbReference type="Gene3D" id="3.40.50.12780">
    <property type="entry name" value="N-terminal domain of ligase-like"/>
    <property type="match status" value="1"/>
</dbReference>
<dbReference type="InterPro" id="IPR005914">
    <property type="entry name" value="Acac_CoA_synth"/>
</dbReference>
<dbReference type="InterPro" id="IPR032387">
    <property type="entry name" value="ACAS_N"/>
</dbReference>
<dbReference type="InterPro" id="IPR045851">
    <property type="entry name" value="AMP-bd_C_sf"/>
</dbReference>
<dbReference type="InterPro" id="IPR020845">
    <property type="entry name" value="AMP-binding_CS"/>
</dbReference>
<dbReference type="InterPro" id="IPR000873">
    <property type="entry name" value="AMP-dep_synth/lig_dom"/>
</dbReference>
<dbReference type="InterPro" id="IPR042099">
    <property type="entry name" value="ANL_N_sf"/>
</dbReference>
<dbReference type="NCBIfam" id="TIGR01217">
    <property type="entry name" value="ac_ac_CoA_syn"/>
    <property type="match status" value="1"/>
</dbReference>
<dbReference type="NCBIfam" id="NF002937">
    <property type="entry name" value="PRK03584.1"/>
    <property type="match status" value="1"/>
</dbReference>
<dbReference type="PANTHER" id="PTHR42921">
    <property type="entry name" value="ACETOACETYL-COA SYNTHETASE"/>
    <property type="match status" value="1"/>
</dbReference>
<dbReference type="PANTHER" id="PTHR42921:SF1">
    <property type="entry name" value="ACETOACETYL-COA SYNTHETASE"/>
    <property type="match status" value="1"/>
</dbReference>
<dbReference type="Pfam" id="PF16177">
    <property type="entry name" value="ACAS_N"/>
    <property type="match status" value="1"/>
</dbReference>
<dbReference type="Pfam" id="PF00501">
    <property type="entry name" value="AMP-binding"/>
    <property type="match status" value="1"/>
</dbReference>
<dbReference type="SUPFAM" id="SSF56801">
    <property type="entry name" value="Acetyl-CoA synthetase-like"/>
    <property type="match status" value="1"/>
</dbReference>
<dbReference type="PROSITE" id="PS00455">
    <property type="entry name" value="AMP_BINDING"/>
    <property type="match status" value="1"/>
</dbReference>
<accession>Q9D2R0</accession>
<accession>A1IG47</accession>
<accession>Q3TCL8</accession>
<accession>Q3UD39</accession>
<proteinExistence type="evidence at protein level"/>
<evidence type="ECO:0000250" key="1">
    <source>
        <dbReference type="UniProtKB" id="Q9JMI1"/>
    </source>
</evidence>
<evidence type="ECO:0000269" key="2">
    <source>
    </source>
</evidence>
<evidence type="ECO:0000305" key="3"/>
<feature type="chain" id="PRO_0000315786" description="Acetoacetyl-CoA synthetase">
    <location>
        <begin position="1"/>
        <end position="672"/>
    </location>
</feature>
<feature type="sequence conflict" description="In Ref. 1; BAF44057." evidence="3" ref="1">
    <original>DD</original>
    <variation>EY</variation>
    <location>
        <begin position="260"/>
        <end position="261"/>
    </location>
</feature>
<feature type="sequence conflict" description="In Ref. 1; BAF44057." evidence="3" ref="1">
    <original>L</original>
    <variation>P</variation>
    <location>
        <position position="401"/>
    </location>
</feature>
<feature type="sequence conflict" description="In Ref. 1; BAF44057." evidence="3" ref="1">
    <original>K</original>
    <variation>T</variation>
    <location>
        <position position="427"/>
    </location>
</feature>
<feature type="sequence conflict" description="In Ref. 3; BAE29423." evidence="3" ref="3">
    <original>F</original>
    <variation>S</variation>
    <location>
        <position position="515"/>
    </location>
</feature>
<feature type="sequence conflict" description="In Ref. 3; BAE41938." evidence="3" ref="3">
    <original>E</original>
    <variation>G</variation>
    <location>
        <position position="649"/>
    </location>
</feature>
<protein>
    <recommendedName>
        <fullName>Acetoacetyl-CoA synthetase</fullName>
        <ecNumber evidence="1">6.2.1.16</ecNumber>
    </recommendedName>
</protein>
<comment type="function">
    <text evidence="1 2">Converts acetoacetate to acetoacetyl-CoA in the cytosol (By similarity). Ketone body-utilizing enzyme, responsible for the synthesis of cholesterol and fatty acids (PubMed:22985732).</text>
</comment>
<comment type="catalytic activity">
    <reaction evidence="1">
        <text>acetoacetate + ATP + CoA = acetoacetyl-CoA + AMP + diphosphate</text>
        <dbReference type="Rhea" id="RHEA:16117"/>
        <dbReference type="ChEBI" id="CHEBI:13705"/>
        <dbReference type="ChEBI" id="CHEBI:30616"/>
        <dbReference type="ChEBI" id="CHEBI:33019"/>
        <dbReference type="ChEBI" id="CHEBI:57286"/>
        <dbReference type="ChEBI" id="CHEBI:57287"/>
        <dbReference type="ChEBI" id="CHEBI:456215"/>
        <dbReference type="EC" id="6.2.1.16"/>
    </reaction>
    <physiologicalReaction direction="left-to-right" evidence="1">
        <dbReference type="Rhea" id="RHEA:16118"/>
    </physiologicalReaction>
</comment>
<comment type="subcellular location">
    <subcellularLocation>
        <location evidence="1">Cytoplasm</location>
        <location evidence="1">Cytosol</location>
    </subcellularLocation>
</comment>
<comment type="similarity">
    <text evidence="3">Belongs to the ATP-dependent AMP-binding enzyme family.</text>
</comment>
<keyword id="KW-0067">ATP-binding</keyword>
<keyword id="KW-0963">Cytoplasm</keyword>
<keyword id="KW-0276">Fatty acid metabolism</keyword>
<keyword id="KW-0436">Ligase</keyword>
<keyword id="KW-0443">Lipid metabolism</keyword>
<keyword id="KW-0547">Nucleotide-binding</keyword>
<keyword id="KW-1185">Reference proteome</keyword>